<protein>
    <recommendedName>
        <fullName>Putative ankyrin repeat protein RC0956</fullName>
    </recommendedName>
</protein>
<dbReference type="EMBL" id="AE006914">
    <property type="protein sequence ID" value="AAL03494.1"/>
    <property type="molecule type" value="Genomic_DNA"/>
</dbReference>
<dbReference type="PIR" id="D97819">
    <property type="entry name" value="D97819"/>
</dbReference>
<dbReference type="RefSeq" id="WP_010977552.1">
    <property type="nucleotide sequence ID" value="NC_003103.1"/>
</dbReference>
<dbReference type="SMR" id="Q92H16"/>
<dbReference type="GeneID" id="927936"/>
<dbReference type="KEGG" id="rco:RC0956"/>
<dbReference type="HOGENOM" id="CLU_192293_0_0_5"/>
<dbReference type="Proteomes" id="UP000000816">
    <property type="component" value="Chromosome"/>
</dbReference>
<dbReference type="Gene3D" id="1.25.40.20">
    <property type="entry name" value="Ankyrin repeat-containing domain"/>
    <property type="match status" value="1"/>
</dbReference>
<dbReference type="InterPro" id="IPR002110">
    <property type="entry name" value="Ankyrin_rpt"/>
</dbReference>
<dbReference type="InterPro" id="IPR036770">
    <property type="entry name" value="Ankyrin_rpt-contain_sf"/>
</dbReference>
<dbReference type="Pfam" id="PF00023">
    <property type="entry name" value="Ank"/>
    <property type="match status" value="1"/>
</dbReference>
<dbReference type="SUPFAM" id="SSF48403">
    <property type="entry name" value="Ankyrin repeat"/>
    <property type="match status" value="1"/>
</dbReference>
<dbReference type="PROSITE" id="PS50297">
    <property type="entry name" value="ANK_REP_REGION"/>
    <property type="match status" value="1"/>
</dbReference>
<dbReference type="PROSITE" id="PS50088">
    <property type="entry name" value="ANK_REPEAT"/>
    <property type="match status" value="1"/>
</dbReference>
<keyword id="KW-0040">ANK repeat</keyword>
<proteinExistence type="predicted"/>
<feature type="chain" id="PRO_0000280931" description="Putative ankyrin repeat protein RC0956">
    <location>
        <begin position="1"/>
        <end position="77"/>
    </location>
</feature>
<feature type="repeat" description="ANK">
    <location>
        <begin position="8"/>
        <end position="38"/>
    </location>
</feature>
<gene>
    <name type="ordered locus">RC0956</name>
</gene>
<name>Y956_RICCN</name>
<reference key="1">
    <citation type="journal article" date="2001" name="Science">
        <title>Mechanisms of evolution in Rickettsia conorii and R. prowazekii.</title>
        <authorList>
            <person name="Ogata H."/>
            <person name="Audic S."/>
            <person name="Renesto-Audiffren P."/>
            <person name="Fournier P.-E."/>
            <person name="Barbe V."/>
            <person name="Samson D."/>
            <person name="Roux V."/>
            <person name="Cossart P."/>
            <person name="Weissenbach J."/>
            <person name="Claverie J.-M."/>
            <person name="Raoult D."/>
        </authorList>
    </citation>
    <scope>NUCLEOTIDE SEQUENCE [LARGE SCALE GENOMIC DNA]</scope>
    <source>
        <strain>ATCC VR-613 / Malish 7</strain>
    </source>
</reference>
<sequence length="77" mass="8724">MQTINGNTDISPLMLASEYGQVTIVKYLLKHGNYNVKGWEKDNLHSDVSCQLTQITEISTLCEKANNPNHQYILETI</sequence>
<accession>Q92H16</accession>
<organism>
    <name type="scientific">Rickettsia conorii (strain ATCC VR-613 / Malish 7)</name>
    <dbReference type="NCBI Taxonomy" id="272944"/>
    <lineage>
        <taxon>Bacteria</taxon>
        <taxon>Pseudomonadati</taxon>
        <taxon>Pseudomonadota</taxon>
        <taxon>Alphaproteobacteria</taxon>
        <taxon>Rickettsiales</taxon>
        <taxon>Rickettsiaceae</taxon>
        <taxon>Rickettsieae</taxon>
        <taxon>Rickettsia</taxon>
        <taxon>spotted fever group</taxon>
    </lineage>
</organism>